<name>RBL_PROMP</name>
<organism>
    <name type="scientific">Prochlorococcus marinus subsp. pastoris (strain CCMP1986 / NIES-2087 / MED4)</name>
    <dbReference type="NCBI Taxonomy" id="59919"/>
    <lineage>
        <taxon>Bacteria</taxon>
        <taxon>Bacillati</taxon>
        <taxon>Cyanobacteriota</taxon>
        <taxon>Cyanophyceae</taxon>
        <taxon>Synechococcales</taxon>
        <taxon>Prochlorococcaceae</taxon>
        <taxon>Prochlorococcus</taxon>
    </lineage>
</organism>
<evidence type="ECO:0000250" key="1">
    <source>
        <dbReference type="UniProtKB" id="O85040"/>
    </source>
</evidence>
<evidence type="ECO:0000255" key="2">
    <source>
        <dbReference type="HAMAP-Rule" id="MF_01338"/>
    </source>
</evidence>
<evidence type="ECO:0000269" key="3">
    <source>
    </source>
</evidence>
<evidence type="ECO:0000303" key="4">
    <source>
    </source>
</evidence>
<dbReference type="EC" id="4.1.1.39" evidence="2 3"/>
<dbReference type="EMBL" id="BX548174">
    <property type="protein sequence ID" value="CAE19009.1"/>
    <property type="molecule type" value="Genomic_DNA"/>
</dbReference>
<dbReference type="RefSeq" id="WP_002805854.1">
    <property type="nucleotide sequence ID" value="NC_005072.1"/>
</dbReference>
<dbReference type="SMR" id="Q7V2D0"/>
<dbReference type="STRING" id="59919.PMM0550"/>
<dbReference type="KEGG" id="pmm:PMM0550"/>
<dbReference type="eggNOG" id="COG1850">
    <property type="taxonomic scope" value="Bacteria"/>
</dbReference>
<dbReference type="HOGENOM" id="CLU_031450_2_0_3"/>
<dbReference type="OrthoDB" id="9770811at2"/>
<dbReference type="Proteomes" id="UP000001026">
    <property type="component" value="Chromosome"/>
</dbReference>
<dbReference type="GO" id="GO:0031470">
    <property type="term" value="C:carboxysome"/>
    <property type="evidence" value="ECO:0007669"/>
    <property type="project" value="UniProtKB-SubCell"/>
</dbReference>
<dbReference type="GO" id="GO:0000287">
    <property type="term" value="F:magnesium ion binding"/>
    <property type="evidence" value="ECO:0007669"/>
    <property type="project" value="UniProtKB-UniRule"/>
</dbReference>
<dbReference type="GO" id="GO:0004497">
    <property type="term" value="F:monooxygenase activity"/>
    <property type="evidence" value="ECO:0007669"/>
    <property type="project" value="UniProtKB-KW"/>
</dbReference>
<dbReference type="GO" id="GO:0016984">
    <property type="term" value="F:ribulose-bisphosphate carboxylase activity"/>
    <property type="evidence" value="ECO:0007669"/>
    <property type="project" value="UniProtKB-UniRule"/>
</dbReference>
<dbReference type="GO" id="GO:0009853">
    <property type="term" value="P:photorespiration"/>
    <property type="evidence" value="ECO:0007669"/>
    <property type="project" value="UniProtKB-KW"/>
</dbReference>
<dbReference type="GO" id="GO:0019253">
    <property type="term" value="P:reductive pentose-phosphate cycle"/>
    <property type="evidence" value="ECO:0007669"/>
    <property type="project" value="UniProtKB-UniRule"/>
</dbReference>
<dbReference type="Gene3D" id="3.20.20.110">
    <property type="entry name" value="Ribulose bisphosphate carboxylase, large subunit, C-terminal domain"/>
    <property type="match status" value="1"/>
</dbReference>
<dbReference type="Gene3D" id="3.30.70.150">
    <property type="entry name" value="RuBisCO large subunit, N-terminal domain"/>
    <property type="match status" value="1"/>
</dbReference>
<dbReference type="HAMAP" id="MF_01338">
    <property type="entry name" value="RuBisCO_L_type1"/>
    <property type="match status" value="1"/>
</dbReference>
<dbReference type="InterPro" id="IPR033966">
    <property type="entry name" value="RuBisCO"/>
</dbReference>
<dbReference type="InterPro" id="IPR000685">
    <property type="entry name" value="RuBisCO_lsu_C"/>
</dbReference>
<dbReference type="InterPro" id="IPR036376">
    <property type="entry name" value="RuBisCO_lsu_C_sf"/>
</dbReference>
<dbReference type="InterPro" id="IPR017443">
    <property type="entry name" value="RuBisCO_lsu_fd_N"/>
</dbReference>
<dbReference type="InterPro" id="IPR036422">
    <property type="entry name" value="RuBisCO_lsu_N_sf"/>
</dbReference>
<dbReference type="InterPro" id="IPR020888">
    <property type="entry name" value="RuBisCO_lsuI"/>
</dbReference>
<dbReference type="NCBIfam" id="NF003252">
    <property type="entry name" value="PRK04208.1"/>
    <property type="match status" value="1"/>
</dbReference>
<dbReference type="PANTHER" id="PTHR42704">
    <property type="entry name" value="RIBULOSE BISPHOSPHATE CARBOXYLASE"/>
    <property type="match status" value="1"/>
</dbReference>
<dbReference type="PANTHER" id="PTHR42704:SF17">
    <property type="entry name" value="RIBULOSE BISPHOSPHATE CARBOXYLASE LARGE CHAIN"/>
    <property type="match status" value="1"/>
</dbReference>
<dbReference type="Pfam" id="PF00016">
    <property type="entry name" value="RuBisCO_large"/>
    <property type="match status" value="1"/>
</dbReference>
<dbReference type="Pfam" id="PF02788">
    <property type="entry name" value="RuBisCO_large_N"/>
    <property type="match status" value="1"/>
</dbReference>
<dbReference type="SFLD" id="SFLDG01052">
    <property type="entry name" value="RuBisCO"/>
    <property type="match status" value="1"/>
</dbReference>
<dbReference type="SFLD" id="SFLDS00014">
    <property type="entry name" value="RuBisCO"/>
    <property type="match status" value="1"/>
</dbReference>
<dbReference type="SFLD" id="SFLDG00301">
    <property type="entry name" value="RuBisCO-like_proteins"/>
    <property type="match status" value="1"/>
</dbReference>
<dbReference type="SUPFAM" id="SSF51649">
    <property type="entry name" value="RuBisCo, C-terminal domain"/>
    <property type="match status" value="1"/>
</dbReference>
<dbReference type="SUPFAM" id="SSF54966">
    <property type="entry name" value="RuBisCO, large subunit, small (N-terminal) domain"/>
    <property type="match status" value="1"/>
</dbReference>
<accession>Q7V2D0</accession>
<sequence length="471" mass="52574">MSKKYDAGVKEYRDTYWTPEYVPLDTDLLACFKCTGQEGVPREEVAAAVAAESSTGTWSTVWSELLTDLEFYKGRCYRIEDVPGDPEAFYAFIAYPLDLFEEGSITNVLTSLVGNVFGFKALRHLRLEDIRFPIAFIKTCGGPPNGIVVERDRLNKYGRPLLGCTIKPKLGLSGKNYGRVVYECLRGGLDLTKDDENINSQPFQRWRERFEFVAEAVKLAQQETGEVKGHYLNCTANTPEELYERAEFAKELDMPIIMHDYITGGFTANTGLANWCRKNGMLLHIHRAMHAVIDRHPKHGIHFRVLAKCLRLSGGDQLHTGTVVGKLEGDRQTTLGYIDNLRESFVPEDRSRGNFFDQDWGSMPGVFAVASGGIHVWHMPALLAIFGDDSCLQFGGGTHGHPWGSAAGAAANRVALEACVKARNAGREIEKESRDILMEAAKHSPELAIALETWKEIKFEFDTVDKLDVQG</sequence>
<proteinExistence type="evidence at protein level"/>
<keyword id="KW-1283">Bacterial microcompartment</keyword>
<keyword id="KW-0113">Calvin cycle</keyword>
<keyword id="KW-0120">Carbon dioxide fixation</keyword>
<keyword id="KW-1282">Carboxysome</keyword>
<keyword id="KW-0456">Lyase</keyword>
<keyword id="KW-0460">Magnesium</keyword>
<keyword id="KW-0479">Metal-binding</keyword>
<keyword id="KW-0503">Monooxygenase</keyword>
<keyword id="KW-0560">Oxidoreductase</keyword>
<keyword id="KW-0601">Photorespiration</keyword>
<keyword id="KW-0602">Photosynthesis</keyword>
<feature type="chain" id="PRO_0000062639" description="Ribulose bisphosphate carboxylase large chain">
    <location>
        <begin position="1"/>
        <end position="471"/>
    </location>
</feature>
<feature type="active site" description="Proton acceptor" evidence="2">
    <location>
        <position position="167"/>
    </location>
</feature>
<feature type="active site" description="Proton acceptor" evidence="2">
    <location>
        <position position="286"/>
    </location>
</feature>
<feature type="binding site" description="in homodimeric partner" evidence="2">
    <location>
        <position position="115"/>
    </location>
    <ligand>
        <name>substrate</name>
    </ligand>
</feature>
<feature type="binding site" evidence="2">
    <location>
        <position position="165"/>
    </location>
    <ligand>
        <name>substrate</name>
    </ligand>
</feature>
<feature type="binding site" evidence="2">
    <location>
        <position position="169"/>
    </location>
    <ligand>
        <name>substrate</name>
    </ligand>
</feature>
<feature type="binding site" description="via carbamate group" evidence="2">
    <location>
        <position position="193"/>
    </location>
    <ligand>
        <name>Mg(2+)</name>
        <dbReference type="ChEBI" id="CHEBI:18420"/>
    </ligand>
</feature>
<feature type="binding site" evidence="2">
    <location>
        <position position="195"/>
    </location>
    <ligand>
        <name>Mg(2+)</name>
        <dbReference type="ChEBI" id="CHEBI:18420"/>
    </ligand>
</feature>
<feature type="binding site" evidence="2">
    <location>
        <position position="196"/>
    </location>
    <ligand>
        <name>Mg(2+)</name>
        <dbReference type="ChEBI" id="CHEBI:18420"/>
    </ligand>
</feature>
<feature type="binding site" evidence="2">
    <location>
        <position position="287"/>
    </location>
    <ligand>
        <name>substrate</name>
    </ligand>
</feature>
<feature type="binding site" evidence="2">
    <location>
        <position position="319"/>
    </location>
    <ligand>
        <name>substrate</name>
    </ligand>
</feature>
<feature type="binding site" evidence="2">
    <location>
        <position position="371"/>
    </location>
    <ligand>
        <name>substrate</name>
    </ligand>
</feature>
<feature type="site" description="Transition state stabilizer" evidence="2">
    <location>
        <position position="326"/>
    </location>
</feature>
<feature type="modified residue" description="N6-carboxylysine" evidence="2">
    <location>
        <position position="193"/>
    </location>
</feature>
<protein>
    <recommendedName>
        <fullName evidence="2">Ribulose bisphosphate carboxylase large chain</fullName>
        <shortName evidence="2">RuBisCO large subunit</shortName>
        <ecNumber evidence="2 3">4.1.1.39</ecNumber>
    </recommendedName>
</protein>
<reference key="1">
    <citation type="journal article" date="2003" name="Nature">
        <title>Genome divergence in two Prochlorococcus ecotypes reflects oceanic niche differentiation.</title>
        <authorList>
            <person name="Rocap G."/>
            <person name="Larimer F.W."/>
            <person name="Lamerdin J.E."/>
            <person name="Malfatti S."/>
            <person name="Chain P."/>
            <person name="Ahlgren N.A."/>
            <person name="Arellano A."/>
            <person name="Coleman M."/>
            <person name="Hauser L."/>
            <person name="Hess W.R."/>
            <person name="Johnson Z.I."/>
            <person name="Land M.L."/>
            <person name="Lindell D."/>
            <person name="Post A.F."/>
            <person name="Regala W."/>
            <person name="Shah M."/>
            <person name="Shaw S.L."/>
            <person name="Steglich C."/>
            <person name="Sullivan M.B."/>
            <person name="Ting C.S."/>
            <person name="Tolonen A."/>
            <person name="Webb E.A."/>
            <person name="Zinser E.R."/>
            <person name="Chisholm S.W."/>
        </authorList>
    </citation>
    <scope>NUCLEOTIDE SEQUENCE [LARGE SCALE GENOMIC DNA]</scope>
    <source>
        <strain>CCMP1986 / NIES-2087 / MED4</strain>
    </source>
</reference>
<reference key="2">
    <citation type="journal article" date="2012" name="J. Bacteriol.">
        <title>Isolation and characterization of the Prochlorococcus carboxysome reveal the presence of the novel shell protein CsoS1D.</title>
        <authorList>
            <person name="Roberts E.W."/>
            <person name="Cai F."/>
            <person name="Kerfeld C.A."/>
            <person name="Cannon G.C."/>
            <person name="Heinhorst S."/>
        </authorList>
    </citation>
    <scope>FUNCTION</scope>
    <scope>CATALYTIC ACTIVITY</scope>
    <scope>BIOPHYSICOCHEMICAL PROPERTIES</scope>
    <scope>PROTEIN ABUNDANCE</scope>
    <scope>SUBCELLULAR LOCATION</scope>
    <source>
        <strain>CCMP1986 / NIES-2087 / MED4</strain>
    </source>
</reference>
<gene>
    <name evidence="2 4" type="primary">cbbL</name>
    <name evidence="2" type="synonym">rbcL</name>
    <name type="ordered locus">PMM0550</name>
</gene>
<comment type="function">
    <text evidence="2 3">RuBisCO catalyzes two reactions: the carboxylation of D-ribulose 1,5-bisphosphate, the primary event in carbon dioxide fixation, as well as the oxidative fragmentation of the pentose substrate in the photorespiration process. Both reactions occur simultaneously and in competition at the same active site (By similarity) (PubMed:22155772). There are estimated to be 152 RuBisCO holoenzymes per carboxysome (PubMed:22155772).</text>
</comment>
<comment type="catalytic activity">
    <reaction evidence="2 3">
        <text>2 (2R)-3-phosphoglycerate + 2 H(+) = D-ribulose 1,5-bisphosphate + CO2 + H2O</text>
        <dbReference type="Rhea" id="RHEA:23124"/>
        <dbReference type="ChEBI" id="CHEBI:15377"/>
        <dbReference type="ChEBI" id="CHEBI:15378"/>
        <dbReference type="ChEBI" id="CHEBI:16526"/>
        <dbReference type="ChEBI" id="CHEBI:57870"/>
        <dbReference type="ChEBI" id="CHEBI:58272"/>
        <dbReference type="EC" id="4.1.1.39"/>
    </reaction>
</comment>
<comment type="catalytic activity">
    <reaction evidence="2">
        <text>D-ribulose 1,5-bisphosphate + O2 = 2-phosphoglycolate + (2R)-3-phosphoglycerate + 2 H(+)</text>
        <dbReference type="Rhea" id="RHEA:36631"/>
        <dbReference type="ChEBI" id="CHEBI:15378"/>
        <dbReference type="ChEBI" id="CHEBI:15379"/>
        <dbReference type="ChEBI" id="CHEBI:57870"/>
        <dbReference type="ChEBI" id="CHEBI:58033"/>
        <dbReference type="ChEBI" id="CHEBI:58272"/>
    </reaction>
</comment>
<comment type="cofactor">
    <cofactor evidence="2">
        <name>Mg(2+)</name>
        <dbReference type="ChEBI" id="CHEBI:18420"/>
    </cofactor>
    <text evidence="2">Binds 1 Mg(2+) ion per subunit.</text>
</comment>
<comment type="biophysicochemical properties">
    <kinetics>
        <KM evidence="3">169.3 uM for D-ribulose 1,5-bisphosphate</KM>
        <Vmax evidence="3">1.28 umol/min/mg enzyme</Vmax>
        <text evidence="3">From purified carboxysomes.</text>
    </kinetics>
</comment>
<comment type="subunit">
    <text evidence="1 2">Heterohexadecamer of 8 large chains and 8 small chains. Forms a CsoS2-CsoS1-RuBisCO complex (By similarity).</text>
</comment>
<comment type="subcellular location">
    <subcellularLocation>
        <location evidence="2 3">Carboxysome</location>
    </subcellularLocation>
    <text evidence="3">This bacterium makes alpha-type carboxysomes.</text>
</comment>
<comment type="miscellaneous">
    <text evidence="2">The basic functional RuBisCO is composed of a large chain homodimer in a 'head-to-tail' conformation. In form I RuBisCO this homodimer is arranged in a barrel-like tetramer with the small subunits forming a tetrameric 'cap' on each end of the 'barrel'.</text>
</comment>
<comment type="similarity">
    <text evidence="2">Belongs to the RuBisCO large chain family. Type I subfamily.</text>
</comment>